<sequence>VATVDCSDYPKPACTLEYMPLCGSDNQTYSNKCSFCNAVVDSNGTLTLSHFGKC</sequence>
<reference key="1">
    <citation type="journal article" date="1993" name="J. Protein Chem.">
        <title>Amino acid sequences of ovomucoid third domains from 27 additional species of birds.</title>
        <authorList>
            <person name="Apostol I."/>
            <person name="Giletto A."/>
            <person name="Komiyama T."/>
            <person name="Zhang W."/>
            <person name="Laskowski M. Jr."/>
        </authorList>
    </citation>
    <scope>PROTEIN SEQUENCE</scope>
</reference>
<accession>P67888</accession>
<accession>P52240</accession>
<evidence type="ECO:0000255" key="1">
    <source>
        <dbReference type="PROSITE-ProRule" id="PRU00798"/>
    </source>
</evidence>
<organism>
    <name type="scientific">Chauna torquata</name>
    <name type="common">Southern screamer</name>
    <dbReference type="NCBI Taxonomy" id="30388"/>
    <lineage>
        <taxon>Eukaryota</taxon>
        <taxon>Metazoa</taxon>
        <taxon>Chordata</taxon>
        <taxon>Craniata</taxon>
        <taxon>Vertebrata</taxon>
        <taxon>Euteleostomi</taxon>
        <taxon>Archelosauria</taxon>
        <taxon>Archosauria</taxon>
        <taxon>Dinosauria</taxon>
        <taxon>Saurischia</taxon>
        <taxon>Theropoda</taxon>
        <taxon>Coelurosauria</taxon>
        <taxon>Aves</taxon>
        <taxon>Neognathae</taxon>
        <taxon>Galloanserae</taxon>
        <taxon>Anseriformes</taxon>
        <taxon>Anhimidae</taxon>
        <taxon>Chauna</taxon>
    </lineage>
</organism>
<protein>
    <recommendedName>
        <fullName>Ovomucoid</fullName>
    </recommendedName>
</protein>
<feature type="chain" id="PRO_0000073081" description="Ovomucoid">
    <location>
        <begin position="1" status="less than"/>
        <end position="54" status="greater than"/>
    </location>
</feature>
<feature type="domain" description="Kazal-like" evidence="1">
    <location>
        <begin position="4"/>
        <end position="54"/>
    </location>
</feature>
<feature type="site" description="Reactive bond 3">
    <location>
        <begin position="16"/>
        <end position="17"/>
    </location>
</feature>
<feature type="glycosylation site" description="N-linked (GlcNAc...) asparagine">
    <location>
        <position position="43"/>
    </location>
</feature>
<feature type="disulfide bond">
    <location>
        <begin position="6"/>
        <end position="36"/>
    </location>
</feature>
<feature type="disulfide bond">
    <location>
        <begin position="14"/>
        <end position="33"/>
    </location>
</feature>
<feature type="disulfide bond">
    <location>
        <begin position="22"/>
        <end position="54"/>
    </location>
</feature>
<feature type="non-terminal residue">
    <location>
        <position position="1"/>
    </location>
</feature>
<feature type="non-terminal residue">
    <location>
        <position position="54"/>
    </location>
</feature>
<keyword id="KW-0903">Direct protein sequencing</keyword>
<keyword id="KW-1015">Disulfide bond</keyword>
<keyword id="KW-0325">Glycoprotein</keyword>
<keyword id="KW-0646">Protease inhibitor</keyword>
<keyword id="KW-0677">Repeat</keyword>
<keyword id="KW-0964">Secreted</keyword>
<keyword id="KW-0722">Serine protease inhibitor</keyword>
<dbReference type="PIR" id="E61587">
    <property type="entry name" value="E61587"/>
</dbReference>
<dbReference type="SMR" id="P67888"/>
<dbReference type="GO" id="GO:0005576">
    <property type="term" value="C:extracellular region"/>
    <property type="evidence" value="ECO:0007669"/>
    <property type="project" value="UniProtKB-SubCell"/>
</dbReference>
<dbReference type="GO" id="GO:0004867">
    <property type="term" value="F:serine-type endopeptidase inhibitor activity"/>
    <property type="evidence" value="ECO:0007669"/>
    <property type="project" value="UniProtKB-KW"/>
</dbReference>
<dbReference type="CDD" id="cd00104">
    <property type="entry name" value="KAZAL_FS"/>
    <property type="match status" value="1"/>
</dbReference>
<dbReference type="FunFam" id="3.30.60.30:FF:000037">
    <property type="entry name" value="Ovomucoid"/>
    <property type="match status" value="1"/>
</dbReference>
<dbReference type="Gene3D" id="3.30.60.30">
    <property type="match status" value="1"/>
</dbReference>
<dbReference type="InterPro" id="IPR051597">
    <property type="entry name" value="Bifunctional_prot_inhibitor"/>
</dbReference>
<dbReference type="InterPro" id="IPR002350">
    <property type="entry name" value="Kazal_dom"/>
</dbReference>
<dbReference type="InterPro" id="IPR036058">
    <property type="entry name" value="Kazal_dom_sf"/>
</dbReference>
<dbReference type="InterPro" id="IPR001239">
    <property type="entry name" value="Prot_inh_Kazal-m"/>
</dbReference>
<dbReference type="PANTHER" id="PTHR47729:SF1">
    <property type="entry name" value="OVOMUCOID-LIKE-RELATED"/>
    <property type="match status" value="1"/>
</dbReference>
<dbReference type="PANTHER" id="PTHR47729">
    <property type="entry name" value="SERINE PEPTIDASE INHIBITOR, KAZAL TYPE 2, TANDEM DUPLICATE 1-RELATED"/>
    <property type="match status" value="1"/>
</dbReference>
<dbReference type="Pfam" id="PF00050">
    <property type="entry name" value="Kazal_1"/>
    <property type="match status" value="1"/>
</dbReference>
<dbReference type="PRINTS" id="PR00290">
    <property type="entry name" value="KAZALINHBTR"/>
</dbReference>
<dbReference type="SMART" id="SM00280">
    <property type="entry name" value="KAZAL"/>
    <property type="match status" value="1"/>
</dbReference>
<dbReference type="SUPFAM" id="SSF100895">
    <property type="entry name" value="Kazal-type serine protease inhibitors"/>
    <property type="match status" value="1"/>
</dbReference>
<dbReference type="PROSITE" id="PS00282">
    <property type="entry name" value="KAZAL_1"/>
    <property type="match status" value="1"/>
</dbReference>
<dbReference type="PROSITE" id="PS51465">
    <property type="entry name" value="KAZAL_2"/>
    <property type="match status" value="1"/>
</dbReference>
<name>IOVO_CHATO</name>
<proteinExistence type="evidence at protein level"/>
<comment type="subcellular location">
    <subcellularLocation>
        <location>Secreted</location>
    </subcellularLocation>
</comment>
<comment type="domain">
    <text>Avian ovomucoid consists of three homologous, tandem Kazal family inhibitory domains.</text>
</comment>